<dbReference type="EMBL" id="CP000253">
    <property type="protein sequence ID" value="ABD29242.1"/>
    <property type="status" value="ALT_INIT"/>
    <property type="molecule type" value="Genomic_DNA"/>
</dbReference>
<dbReference type="RefSeq" id="YP_498659.1">
    <property type="nucleotide sequence ID" value="NC_007795.1"/>
</dbReference>
<dbReference type="SMR" id="Q2G1P9"/>
<dbReference type="STRING" id="93061.SAOUHSC_00054"/>
<dbReference type="GeneID" id="3919086"/>
<dbReference type="KEGG" id="sao:SAOUHSC_00054"/>
<dbReference type="PATRIC" id="fig|93061.5.peg.48"/>
<dbReference type="HOGENOM" id="CLU_071589_0_1_9"/>
<dbReference type="OrthoDB" id="2189886at2"/>
<dbReference type="Proteomes" id="UP000008816">
    <property type="component" value="Chromosome"/>
</dbReference>
<dbReference type="GO" id="GO:0005886">
    <property type="term" value="C:plasma membrane"/>
    <property type="evidence" value="ECO:0007669"/>
    <property type="project" value="UniProtKB-SubCell"/>
</dbReference>
<dbReference type="Gene3D" id="2.50.20.40">
    <property type="match status" value="1"/>
</dbReference>
<dbReference type="InterPro" id="IPR007595">
    <property type="entry name" value="Csa"/>
</dbReference>
<dbReference type="InterPro" id="IPR038641">
    <property type="entry name" value="Csa_sf"/>
</dbReference>
<dbReference type="NCBIfam" id="TIGR01742">
    <property type="entry name" value="SA_tandem_lipo"/>
    <property type="match status" value="1"/>
</dbReference>
<dbReference type="Pfam" id="PF04507">
    <property type="entry name" value="DUF576"/>
    <property type="match status" value="1"/>
</dbReference>
<dbReference type="PROSITE" id="PS51257">
    <property type="entry name" value="PROKAR_LIPOPROTEIN"/>
    <property type="match status" value="1"/>
</dbReference>
<evidence type="ECO:0000255" key="1">
    <source>
        <dbReference type="PROSITE-ProRule" id="PRU00303"/>
    </source>
</evidence>
<evidence type="ECO:0000305" key="2"/>
<keyword id="KW-1003">Cell membrane</keyword>
<keyword id="KW-0449">Lipoprotein</keyword>
<keyword id="KW-0472">Membrane</keyword>
<keyword id="KW-0564">Palmitate</keyword>
<keyword id="KW-1185">Reference proteome</keyword>
<keyword id="KW-0732">Signal</keyword>
<protein>
    <recommendedName>
        <fullName>Uncharacterized lipoprotein SAOUHSC_00054</fullName>
    </recommendedName>
</protein>
<organism>
    <name type="scientific">Staphylococcus aureus (strain NCTC 8325 / PS 47)</name>
    <dbReference type="NCBI Taxonomy" id="93061"/>
    <lineage>
        <taxon>Bacteria</taxon>
        <taxon>Bacillati</taxon>
        <taxon>Bacillota</taxon>
        <taxon>Bacilli</taxon>
        <taxon>Bacillales</taxon>
        <taxon>Staphylococcaceae</taxon>
        <taxon>Staphylococcus</taxon>
    </lineage>
</organism>
<comment type="subcellular location">
    <subcellularLocation>
        <location evidence="1">Cell membrane</location>
        <topology evidence="1">Lipid-anchor</topology>
    </subcellularLocation>
</comment>
<comment type="similarity">
    <text evidence="2">Belongs to the staphylococcal tandem lipoprotein family.</text>
</comment>
<comment type="sequence caution" evidence="2">
    <conflict type="erroneous initiation">
        <sequence resource="EMBL-CDS" id="ABD29242"/>
    </conflict>
</comment>
<gene>
    <name type="ordered locus">SAOUHSC_00054</name>
</gene>
<reference key="1">
    <citation type="book" date="2006" name="Gram positive pathogens, 2nd edition">
        <title>The Staphylococcus aureus NCTC 8325 genome.</title>
        <editorList>
            <person name="Fischetti V."/>
            <person name="Novick R."/>
            <person name="Ferretti J."/>
            <person name="Portnoy D."/>
            <person name="Rood J."/>
        </editorList>
        <authorList>
            <person name="Gillaspy A.F."/>
            <person name="Worrell V."/>
            <person name="Orvis J."/>
            <person name="Roe B.A."/>
            <person name="Dyer D.W."/>
            <person name="Iandolo J.J."/>
        </authorList>
    </citation>
    <scope>NUCLEOTIDE SEQUENCE [LARGE SCALE GENOMIC DNA]</scope>
    <source>
        <strain>NCTC 8325 / PS 47</strain>
    </source>
</reference>
<name>Y054_STAA8</name>
<proteinExistence type="inferred from homology"/>
<feature type="signal peptide" evidence="1">
    <location>
        <begin position="1"/>
        <end position="23"/>
    </location>
</feature>
<feature type="chain" id="PRO_0000282086" description="Uncharacterized lipoprotein SAOUHSC_00054">
    <location>
        <begin position="24"/>
        <end position="255"/>
    </location>
</feature>
<feature type="lipid moiety-binding region" description="N-palmitoyl cysteine" evidence="1">
    <location>
        <position position="24"/>
    </location>
</feature>
<feature type="lipid moiety-binding region" description="S-diacylglycerol cysteine" evidence="1">
    <location>
        <position position="24"/>
    </location>
</feature>
<sequence>MKRLNKLVLGIIFLFLVISITAGCGIGKEAKIKKSFEKTLSMYPIKNLEDLYDKEGYRDDEFDKNDKGTWIIGSEMATQNKGEALKVKGMVLYMNRNTKTTKGYYYVNAIKNDKDGRPQENEKRYPVKMVDNKIIPTKEIKDKNIKKEIENFKFFVQYGNFKDLSKYKDGDISYNPEVPSYSAKYQLTNDDYNVKQLRKRYDIPTNKAPKLLLKGTGNLKGSSVGYKDIEFTFVEKKEENIYFSDGLIFKPSEDK</sequence>
<accession>Q2G1P9</accession>